<reference key="1">
    <citation type="journal article" date="2017" name="Mol. Cell">
        <title>Tardigrades use intrinsically disordered proteins to survive desiccation.</title>
        <authorList>
            <person name="Boothby T.C."/>
            <person name="Tapia H."/>
            <person name="Brozena A.H."/>
            <person name="Piszkiewicz S."/>
            <person name="Smith A.E."/>
            <person name="Giovannini I."/>
            <person name="Rebecchi L."/>
            <person name="Pielak G.J."/>
            <person name="Koshland D."/>
            <person name="Goldstein B."/>
        </authorList>
    </citation>
    <scope>FUNCTION</scope>
</reference>
<reference key="2">
    <citation type="journal article" date="2021" name="Mol. Cell">
        <title>Reconsidering the 'glass transition' hypothesis of intrinsically unstructured CAHS proteins in desiccation tolerance of tardigrades.</title>
        <authorList>
            <person name="Arakawa K."/>
            <person name="Numata K."/>
        </authorList>
    </citation>
    <scope>FUNCTION</scope>
</reference>
<reference key="3">
    <citation type="journal article" date="2022" name="Angew. Chem. Int. Ed.">
        <title>Intrinsically Disordered Tardigrade Proteins Self-Assemble into Fibrous Gels in Response to Environmental Stress.</title>
        <authorList>
            <person name="Malki A."/>
            <person name="Teulon J.M."/>
            <person name="Camacho-Zarco A.R."/>
            <person name="Chen S.W."/>
            <person name="Adamski W."/>
            <person name="Maurin D."/>
            <person name="Salvi N."/>
            <person name="Pellequer J.L."/>
            <person name="Blackledge M."/>
        </authorList>
    </citation>
    <scope>SUBUNIT</scope>
</reference>
<dbReference type="SMR" id="P0CU50"/>
<dbReference type="GO" id="GO:0005737">
    <property type="term" value="C:cytoplasm"/>
    <property type="evidence" value="ECO:0007669"/>
    <property type="project" value="UniProtKB-SubCell"/>
</dbReference>
<dbReference type="GO" id="GO:0009269">
    <property type="term" value="P:response to desiccation"/>
    <property type="evidence" value="ECO:0000315"/>
    <property type="project" value="DisProt"/>
</dbReference>
<accession>P0CU50</accession>
<comment type="function">
    <text evidence="4 5 11">CAHS proteins are cytosolic heat soluble proteins that seem to contribute to the anhydrobiosis in tardigrades, but their specific mechanisms are yet to be identified (PubMed:28306513, PubMed:33545053). It is possible that protection during anhydrobiosis might occur via the stabilization of vitrifying small molecules such as sugars, but not via the direct glass transition of CAHS proteins themselves (Probable).</text>
</comment>
<comment type="subunit">
    <text evidence="6">At high concentrations, the monomers successively form oligomers, long fibers and eventually a gel-like matrix in a strongly temperature-dependent manner (PubMed:34750927). It may be that under adverse environmental conditions, such as low temperatures, the gel-like intracellular matrix can sequester soluble proteins in their native state, maintaining their functional form until environmental conditions become more favourable (PubMed:34750927).</text>
</comment>
<comment type="subcellular location">
    <subcellularLocation>
        <location evidence="10">Cytoplasm</location>
    </subcellularLocation>
</comment>
<comment type="domain">
    <text evidence="1">CAHS proteins contain 2 repeats of 19-mer peptides designated as CAHS-motifs that comprise each two octapeptides connected by a tripeptide (By similarity).</text>
</comment>
<comment type="miscellaneous">
    <text evidence="4">Trehalose, a disaccharide essential for several organisms to survive drying, is detected at low levels or not at all in some tardigrade species, indicating that tardigrades possess potentially novel mechanisms for surviving desiccation involving tardigrade-specific intrinsically disordered proteins (TDPs) (PubMed:28306513).</text>
</comment>
<comment type="similarity">
    <text evidence="9">Belongs to the Cytosolic-abundant heat soluble protein (CAHS) family.</text>
</comment>
<comment type="caution">
    <text evidence="4 5">It was suggested that CAHS proteins were intrinsically unstructured and show heat-dependent glass transition, which contributes to the vitrification of cells, and this further leads to desiccation tolerance (PubMed:28306513). However, more recent studies led to the conclusion that there was no evidence supporting glass transition of CAHS proteins to be contributing to the glass transition of the whole tardigrade (PubMed:33545053).</text>
</comment>
<name>CAHS8_HYPEX</name>
<protein>
    <recommendedName>
        <fullName evidence="7">Cytosolic-abundant heat soluble protein 94063</fullName>
        <shortName evidence="7">CAHS 94063</shortName>
    </recommendedName>
    <alternativeName>
        <fullName evidence="8">Cytosolic abundant heat-soluble protein 8</fullName>
    </alternativeName>
    <alternativeName>
        <fullName evidence="7">Tardigrade-specific intrinsically disordered protein CAHS 94063</fullName>
        <shortName evidence="7">TDP CAHS 94063</shortName>
    </alternativeName>
</protein>
<keyword id="KW-0175">Coiled coil</keyword>
<keyword id="KW-0963">Cytoplasm</keyword>
<keyword id="KW-0677">Repeat</keyword>
<keyword id="KW-0346">Stress response</keyword>
<sequence>MSGRNVESHMERNEKVVVNNSGHADVKKQQQQVEHTEFTHTEVKAPLIHPAPPIISTGAAGLAEEIVGQGFTASAARISGGTAEVHLQPSAAMTEEARRDQERYRQEQESIAKQQEREMEKKTEAYRKTAEAEAEKIRKELEKQHARDVEFRKDLIESTIDRQKREVDLEAKMAKRELDREGQLAKEALERSRLATNVEVNFDSAAGHTVSGGTTVSTSDKMEIKRN</sequence>
<feature type="chain" id="PRO_0000440197" description="Cytosolic-abundant heat soluble protein 94063">
    <location>
        <begin position="1"/>
        <end position="227"/>
    </location>
</feature>
<feature type="region of interest" description="Disordered" evidence="3">
    <location>
        <begin position="1"/>
        <end position="35"/>
    </location>
</feature>
<feature type="region of interest" description="Disordered" evidence="3">
    <location>
        <begin position="85"/>
        <end position="126"/>
    </location>
</feature>
<feature type="region of interest" description="Helical" evidence="6">
    <location>
        <begin position="95"/>
        <end position="194"/>
    </location>
</feature>
<feature type="region of interest" description="CAHS motif 1" evidence="1">
    <location>
        <begin position="126"/>
        <end position="144"/>
    </location>
</feature>
<feature type="region of interest" description="CAHS motif 2" evidence="1">
    <location>
        <begin position="163"/>
        <end position="181"/>
    </location>
</feature>
<feature type="region of interest" description="Disordered" evidence="3">
    <location>
        <begin position="205"/>
        <end position="227"/>
    </location>
</feature>
<feature type="coiled-coil region" evidence="2">
    <location>
        <begin position="91"/>
        <end position="191"/>
    </location>
</feature>
<feature type="compositionally biased region" description="Basic and acidic residues" evidence="3">
    <location>
        <begin position="1"/>
        <end position="15"/>
    </location>
</feature>
<feature type="compositionally biased region" description="Basic and acidic residues" evidence="3">
    <location>
        <begin position="24"/>
        <end position="35"/>
    </location>
</feature>
<feature type="compositionally biased region" description="Basic and acidic residues" evidence="3">
    <location>
        <begin position="95"/>
        <end position="126"/>
    </location>
</feature>
<feature type="compositionally biased region" description="Low complexity" evidence="3">
    <location>
        <begin position="205"/>
        <end position="219"/>
    </location>
</feature>
<proteinExistence type="evidence at protein level"/>
<organism evidence="7">
    <name type="scientific">Hypsibius exemplaris</name>
    <name type="common">Freshwater tardigrade</name>
    <dbReference type="NCBI Taxonomy" id="2072580"/>
    <lineage>
        <taxon>Eukaryota</taxon>
        <taxon>Metazoa</taxon>
        <taxon>Ecdysozoa</taxon>
        <taxon>Tardigrada</taxon>
        <taxon>Eutardigrada</taxon>
        <taxon>Parachela</taxon>
        <taxon>Hypsibioidea</taxon>
        <taxon>Hypsibiidae</taxon>
        <taxon>Hypsibius</taxon>
    </lineage>
</organism>
<evidence type="ECO:0000250" key="1">
    <source>
        <dbReference type="UniProtKB" id="J7M799"/>
    </source>
</evidence>
<evidence type="ECO:0000255" key="2"/>
<evidence type="ECO:0000256" key="3">
    <source>
        <dbReference type="SAM" id="MobiDB-lite"/>
    </source>
</evidence>
<evidence type="ECO:0000269" key="4">
    <source>
    </source>
</evidence>
<evidence type="ECO:0000269" key="5">
    <source>
    </source>
</evidence>
<evidence type="ECO:0000269" key="6">
    <source>
    </source>
</evidence>
<evidence type="ECO:0000303" key="7">
    <source>
    </source>
</evidence>
<evidence type="ECO:0000303" key="8">
    <source>
    </source>
</evidence>
<evidence type="ECO:0000305" key="9"/>
<evidence type="ECO:0000305" key="10">
    <source>
    </source>
</evidence>
<evidence type="ECO:0000305" key="11">
    <source>
    </source>
</evidence>
<gene>
    <name evidence="7" type="primary">CAHS 94063</name>
    <name evidence="8" type="synonym">CAHS-8</name>
</gene>